<reference key="1">
    <citation type="submission" date="2005-05" db="EMBL/GenBank/DDBJ databases">
        <title>High-throughput cloning of full-length human cDNAs directly from cDNA libraries optimized for large and rare transcripts.</title>
        <authorList>
            <person name="Birkett C."/>
            <person name="Cho J."/>
            <person name="Gau Y."/>
            <person name="Hamer R."/>
            <person name="Kelly S."/>
            <person name="Kovacs K."/>
            <person name="Liu L."/>
            <person name="Liu X."/>
            <person name="Porter J."/>
            <person name="Sachs A."/>
            <person name="Shu Y."/>
            <person name="Sun Z."/>
            <person name="Wong J."/>
            <person name="Wu M."/>
            <person name="Zhang X."/>
            <person name="Jay G."/>
            <person name="He W."/>
        </authorList>
    </citation>
    <scope>NUCLEOTIDE SEQUENCE [LARGE SCALE MRNA]</scope>
    <source>
        <tissue>Brain</tissue>
    </source>
</reference>
<reference key="2">
    <citation type="journal article" date="2006" name="Nature">
        <title>The finished DNA sequence of human chromosome 12.</title>
        <authorList>
            <person name="Scherer S.E."/>
            <person name="Muzny D.M."/>
            <person name="Buhay C.J."/>
            <person name="Chen R."/>
            <person name="Cree A."/>
            <person name="Ding Y."/>
            <person name="Dugan-Rocha S."/>
            <person name="Gill R."/>
            <person name="Gunaratne P."/>
            <person name="Harris R.A."/>
            <person name="Hawes A.C."/>
            <person name="Hernandez J."/>
            <person name="Hodgson A.V."/>
            <person name="Hume J."/>
            <person name="Jackson A."/>
            <person name="Khan Z.M."/>
            <person name="Kovar-Smith C."/>
            <person name="Lewis L.R."/>
            <person name="Lozado R.J."/>
            <person name="Metzker M.L."/>
            <person name="Milosavljevic A."/>
            <person name="Miner G.R."/>
            <person name="Montgomery K.T."/>
            <person name="Morgan M.B."/>
            <person name="Nazareth L.V."/>
            <person name="Scott G."/>
            <person name="Sodergren E."/>
            <person name="Song X.-Z."/>
            <person name="Steffen D."/>
            <person name="Lovering R.C."/>
            <person name="Wheeler D.A."/>
            <person name="Worley K.C."/>
            <person name="Yuan Y."/>
            <person name="Zhang Z."/>
            <person name="Adams C.Q."/>
            <person name="Ansari-Lari M.A."/>
            <person name="Ayele M."/>
            <person name="Brown M.J."/>
            <person name="Chen G."/>
            <person name="Chen Z."/>
            <person name="Clerc-Blankenburg K.P."/>
            <person name="Davis C."/>
            <person name="Delgado O."/>
            <person name="Dinh H.H."/>
            <person name="Draper H."/>
            <person name="Gonzalez-Garay M.L."/>
            <person name="Havlak P."/>
            <person name="Jackson L.R."/>
            <person name="Jacob L.S."/>
            <person name="Kelly S.H."/>
            <person name="Li L."/>
            <person name="Li Z."/>
            <person name="Liu J."/>
            <person name="Liu W."/>
            <person name="Lu J."/>
            <person name="Maheshwari M."/>
            <person name="Nguyen B.-V."/>
            <person name="Okwuonu G.O."/>
            <person name="Pasternak S."/>
            <person name="Perez L.M."/>
            <person name="Plopper F.J.H."/>
            <person name="Santibanez J."/>
            <person name="Shen H."/>
            <person name="Tabor P.E."/>
            <person name="Verduzco D."/>
            <person name="Waldron L."/>
            <person name="Wang Q."/>
            <person name="Williams G.A."/>
            <person name="Zhang J."/>
            <person name="Zhou J."/>
            <person name="Allen C.C."/>
            <person name="Amin A.G."/>
            <person name="Anyalebechi V."/>
            <person name="Bailey M."/>
            <person name="Barbaria J.A."/>
            <person name="Bimage K.E."/>
            <person name="Bryant N.P."/>
            <person name="Burch P.E."/>
            <person name="Burkett C.E."/>
            <person name="Burrell K.L."/>
            <person name="Calderon E."/>
            <person name="Cardenas V."/>
            <person name="Carter K."/>
            <person name="Casias K."/>
            <person name="Cavazos I."/>
            <person name="Cavazos S.R."/>
            <person name="Ceasar H."/>
            <person name="Chacko J."/>
            <person name="Chan S.N."/>
            <person name="Chavez D."/>
            <person name="Christopoulos C."/>
            <person name="Chu J."/>
            <person name="Cockrell R."/>
            <person name="Cox C.D."/>
            <person name="Dang M."/>
            <person name="Dathorne S.R."/>
            <person name="David R."/>
            <person name="Davis C.M."/>
            <person name="Davy-Carroll L."/>
            <person name="Deshazo D.R."/>
            <person name="Donlin J.E."/>
            <person name="D'Souza L."/>
            <person name="Eaves K.A."/>
            <person name="Egan A."/>
            <person name="Emery-Cohen A.J."/>
            <person name="Escotto M."/>
            <person name="Flagg N."/>
            <person name="Forbes L.D."/>
            <person name="Gabisi A.M."/>
            <person name="Garza M."/>
            <person name="Hamilton C."/>
            <person name="Henderson N."/>
            <person name="Hernandez O."/>
            <person name="Hines S."/>
            <person name="Hogues M.E."/>
            <person name="Huang M."/>
            <person name="Idlebird D.G."/>
            <person name="Johnson R."/>
            <person name="Jolivet A."/>
            <person name="Jones S."/>
            <person name="Kagan R."/>
            <person name="King L.M."/>
            <person name="Leal B."/>
            <person name="Lebow H."/>
            <person name="Lee S."/>
            <person name="LeVan J.M."/>
            <person name="Lewis L.C."/>
            <person name="London P."/>
            <person name="Lorensuhewa L.M."/>
            <person name="Loulseged H."/>
            <person name="Lovett D.A."/>
            <person name="Lucier A."/>
            <person name="Lucier R.L."/>
            <person name="Ma J."/>
            <person name="Madu R.C."/>
            <person name="Mapua P."/>
            <person name="Martindale A.D."/>
            <person name="Martinez E."/>
            <person name="Massey E."/>
            <person name="Mawhiney S."/>
            <person name="Meador M.G."/>
            <person name="Mendez S."/>
            <person name="Mercado C."/>
            <person name="Mercado I.C."/>
            <person name="Merritt C.E."/>
            <person name="Miner Z.L."/>
            <person name="Minja E."/>
            <person name="Mitchell T."/>
            <person name="Mohabbat F."/>
            <person name="Mohabbat K."/>
            <person name="Montgomery B."/>
            <person name="Moore N."/>
            <person name="Morris S."/>
            <person name="Munidasa M."/>
            <person name="Ngo R.N."/>
            <person name="Nguyen N.B."/>
            <person name="Nickerson E."/>
            <person name="Nwaokelemeh O.O."/>
            <person name="Nwokenkwo S."/>
            <person name="Obregon M."/>
            <person name="Oguh M."/>
            <person name="Oragunye N."/>
            <person name="Oviedo R.J."/>
            <person name="Parish B.J."/>
            <person name="Parker D.N."/>
            <person name="Parrish J."/>
            <person name="Parks K.L."/>
            <person name="Paul H.A."/>
            <person name="Payton B.A."/>
            <person name="Perez A."/>
            <person name="Perrin W."/>
            <person name="Pickens A."/>
            <person name="Primus E.L."/>
            <person name="Pu L.-L."/>
            <person name="Puazo M."/>
            <person name="Quiles M.M."/>
            <person name="Quiroz J.B."/>
            <person name="Rabata D."/>
            <person name="Reeves K."/>
            <person name="Ruiz S.J."/>
            <person name="Shao H."/>
            <person name="Sisson I."/>
            <person name="Sonaike T."/>
            <person name="Sorelle R.P."/>
            <person name="Sutton A.E."/>
            <person name="Svatek A.F."/>
            <person name="Svetz L.A."/>
            <person name="Tamerisa K.S."/>
            <person name="Taylor T.R."/>
            <person name="Teague B."/>
            <person name="Thomas N."/>
            <person name="Thorn R.D."/>
            <person name="Trejos Z.Y."/>
            <person name="Trevino B.K."/>
            <person name="Ukegbu O.N."/>
            <person name="Urban J.B."/>
            <person name="Vasquez L.I."/>
            <person name="Vera V.A."/>
            <person name="Villasana D.M."/>
            <person name="Wang L."/>
            <person name="Ward-Moore S."/>
            <person name="Warren J.T."/>
            <person name="Wei X."/>
            <person name="White F."/>
            <person name="Williamson A.L."/>
            <person name="Wleczyk R."/>
            <person name="Wooden H.S."/>
            <person name="Wooden S.H."/>
            <person name="Yen J."/>
            <person name="Yoon L."/>
            <person name="Yoon V."/>
            <person name="Zorrilla S.E."/>
            <person name="Nelson D."/>
            <person name="Kucherlapati R."/>
            <person name="Weinstock G."/>
            <person name="Gibbs R.A."/>
        </authorList>
    </citation>
    <scope>NUCLEOTIDE SEQUENCE [LARGE SCALE GENOMIC DNA]</scope>
</reference>
<reference key="3">
    <citation type="submission" date="2005-07" db="EMBL/GenBank/DDBJ databases">
        <authorList>
            <person name="Mural R.J."/>
            <person name="Istrail S."/>
            <person name="Sutton G.G."/>
            <person name="Florea L."/>
            <person name="Halpern A.L."/>
            <person name="Mobarry C.M."/>
            <person name="Lippert R."/>
            <person name="Walenz B."/>
            <person name="Shatkay H."/>
            <person name="Dew I."/>
            <person name="Miller J.R."/>
            <person name="Flanigan M.J."/>
            <person name="Edwards N.J."/>
            <person name="Bolanos R."/>
            <person name="Fasulo D."/>
            <person name="Halldorsson B.V."/>
            <person name="Hannenhalli S."/>
            <person name="Turner R."/>
            <person name="Yooseph S."/>
            <person name="Lu F."/>
            <person name="Nusskern D.R."/>
            <person name="Shue B.C."/>
            <person name="Zheng X.H."/>
            <person name="Zhong F."/>
            <person name="Delcher A.L."/>
            <person name="Huson D.H."/>
            <person name="Kravitz S.A."/>
            <person name="Mouchard L."/>
            <person name="Reinert K."/>
            <person name="Remington K.A."/>
            <person name="Clark A.G."/>
            <person name="Waterman M.S."/>
            <person name="Eichler E.E."/>
            <person name="Adams M.D."/>
            <person name="Hunkapiller M.W."/>
            <person name="Myers E.W."/>
            <person name="Venter J.C."/>
        </authorList>
    </citation>
    <scope>NUCLEOTIDE SEQUENCE [LARGE SCALE GENOMIC DNA]</scope>
</reference>
<reference key="4">
    <citation type="journal article" date="2019" name="Autophagy">
        <title>Redundancy of human ATG4 protease isoforms in autophagy and LC3/GABARAP processing revealed in cells.</title>
        <authorList>
            <person name="Agrotis A."/>
            <person name="Pengo N."/>
            <person name="Burden J.J."/>
            <person name="Ketteler R."/>
        </authorList>
    </citation>
    <scope>PROTEOLYTIC CLEAVAGE</scope>
</reference>
<organism>
    <name type="scientific">Homo sapiens</name>
    <name type="common">Human</name>
    <dbReference type="NCBI Taxonomy" id="9606"/>
    <lineage>
        <taxon>Eukaryota</taxon>
        <taxon>Metazoa</taxon>
        <taxon>Chordata</taxon>
        <taxon>Craniata</taxon>
        <taxon>Vertebrata</taxon>
        <taxon>Euteleostomi</taxon>
        <taxon>Mammalia</taxon>
        <taxon>Eutheria</taxon>
        <taxon>Euarchontoglires</taxon>
        <taxon>Primates</taxon>
        <taxon>Haplorrhini</taxon>
        <taxon>Catarrhini</taxon>
        <taxon>Hominidae</taxon>
        <taxon>Homo</taxon>
    </lineage>
</organism>
<gene>
    <name type="primary">MAP1LC3B2</name>
</gene>
<sequence length="125" mass="14628">MPSEKTFKQRRTFEQRVEDVRLIREQHPTKIPVIIERYKGEKQLPVLDKTKFLVPDHVNMSELIKIIRRRLQLNANQAFFLLVNGHSMVSVSTPISEVYESEKDEDGFLYMVCASQETFGMKLSV</sequence>
<name>MP3B2_HUMAN</name>
<protein>
    <recommendedName>
        <fullName>Microtubule-associated protein 1 light chain 3 beta 2</fullName>
    </recommendedName>
    <alternativeName>
        <fullName>Microtubule-associated proteins 1A/1B light chain 3 beta 2</fullName>
    </alternativeName>
    <alternativeName>
        <fullName>Microtubule-associated proteins 1A/1B light chain 3B-like</fullName>
        <shortName>MAP1A/MAP1B LC3 B-like</shortName>
        <shortName>MAP1A/MAP1B light chain 3 B-like</shortName>
    </alternativeName>
</protein>
<keyword id="KW-0072">Autophagy</keyword>
<keyword id="KW-0963">Cytoplasm</keyword>
<keyword id="KW-0968">Cytoplasmic vesicle</keyword>
<keyword id="KW-0206">Cytoskeleton</keyword>
<keyword id="KW-0449">Lipoprotein</keyword>
<keyword id="KW-0472">Membrane</keyword>
<keyword id="KW-0493">Microtubule</keyword>
<keyword id="KW-1185">Reference proteome</keyword>
<keyword id="KW-0833">Ubl conjugation pathway</keyword>
<feature type="chain" id="PRO_0000343732" description="Microtubule-associated protein 1 light chain 3 beta 2">
    <location>
        <begin position="1"/>
        <end position="120"/>
    </location>
</feature>
<feature type="propeptide" id="PRO_0000343733" description="Removed in mature form" evidence="3">
    <location>
        <begin position="121"/>
        <end position="125"/>
    </location>
</feature>
<feature type="site" description="Cleavage; by ATG4B" evidence="3">
    <location>
        <begin position="120"/>
        <end position="121"/>
    </location>
</feature>
<feature type="lipid moiety-binding region" description="Phosphatidylethanolamine amidated glycine; alternate" evidence="3">
    <location>
        <position position="120"/>
    </location>
</feature>
<feature type="lipid moiety-binding region" description="Phosphatidylserine amidated glycine; alternate" evidence="3">
    <location>
        <position position="120"/>
    </location>
</feature>
<comment type="function">
    <text evidence="3">Ubiquitin-like modifier involved in formation of autophagosomal vacuoles (autophagosomes). Plays a role in mitophagy which contributes to regulate mitochondrial quantity and quality by eliminating the mitochondria to a basal level to fulfill cellular energy requirements and preventing excess ROS production. In response to cellular stress and upon mitochondria fission, binds C-18 ceramides and anchors autophagolysosomes to outer mitochondrial membranes to eliminate damaged mitochondria. While LC3s are involved in elongation of the phagophore membrane, the GABARAP/GATE-16 subfamily is essential for a later stage in autophagosome maturation.</text>
</comment>
<comment type="subunit">
    <text evidence="1">3 different light chains, LC1 (a cleavage product of MAP1B), LC2 (a cleavage product of MAP1A) and LC3 (produced by one of the MAP1LC3 genes), can associate with the MAP1A or MAP1B heavy chains.</text>
</comment>
<comment type="subcellular location">
    <subcellularLocation>
        <location evidence="3">Cytoplasmic vesicle</location>
        <location evidence="3">Autophagosome membrane</location>
        <topology evidence="3">Lipid-anchor</topology>
    </subcellularLocation>
    <subcellularLocation>
        <location evidence="3">Endomembrane system</location>
        <topology evidence="3">Lipid-anchor</topology>
    </subcellularLocation>
    <subcellularLocation>
        <location evidence="2">Cytoplasm</location>
        <location evidence="2">Cytoskeleton</location>
    </subcellularLocation>
</comment>
<comment type="PTM">
    <text evidence="3 4">The precursor molecule is cleaved by ATG4 (ATG4A, ATG4B, ATG4C or ATG4D) to expose the glycine at the C-terminus and form the cytosolic form, LC3-I (PubMed:30661429). The processed form is then activated by APG7L/ATG7, transferred to ATG3 and conjugated to phosphatidylethanolamine (PE) phospholipid to form the membrane-bound form, LC3-II (By similarity). During non-canonical autophagy, the processed form is conjugated to phosphatidylserine (PS) phospholipid (By similarity). ATG4 proteins also mediate the delipidation of PE-conjugated forms (By similarity). In addition, ATG4B and ATG4D mediate delipidation of ATG8 proteins conjugated to PS during non-canonical autophagy (By similarity).</text>
</comment>
<comment type="similarity">
    <text evidence="5">Belongs to the ATG8 family.</text>
</comment>
<accession>A6NCE7</accession>
<evidence type="ECO:0000250" key="1">
    <source>
        <dbReference type="UniProtKB" id="Q62625"/>
    </source>
</evidence>
<evidence type="ECO:0000250" key="2">
    <source>
        <dbReference type="UniProtKB" id="Q9CQV6"/>
    </source>
</evidence>
<evidence type="ECO:0000250" key="3">
    <source>
        <dbReference type="UniProtKB" id="Q9GZQ8"/>
    </source>
</evidence>
<evidence type="ECO:0000269" key="4">
    <source>
    </source>
</evidence>
<evidence type="ECO:0000305" key="5"/>
<proteinExistence type="evidence at protein level"/>
<dbReference type="EMBL" id="DN994744">
    <property type="status" value="NOT_ANNOTATED_CDS"/>
    <property type="molecule type" value="mRNA"/>
</dbReference>
<dbReference type="EMBL" id="AC125603">
    <property type="status" value="NOT_ANNOTATED_CDS"/>
    <property type="molecule type" value="Genomic_DNA"/>
</dbReference>
<dbReference type="EMBL" id="CH471054">
    <property type="protein sequence ID" value="EAW98085.1"/>
    <property type="molecule type" value="Genomic_DNA"/>
</dbReference>
<dbReference type="CCDS" id="CCDS41841.1"/>
<dbReference type="RefSeq" id="NP_001078950.1">
    <property type="nucleotide sequence ID" value="NM_001085481.3"/>
</dbReference>
<dbReference type="BMRB" id="A6NCE7"/>
<dbReference type="SMR" id="A6NCE7"/>
<dbReference type="BioGRID" id="568619">
    <property type="interactions" value="20"/>
</dbReference>
<dbReference type="FunCoup" id="A6NCE7">
    <property type="interactions" value="886"/>
</dbReference>
<dbReference type="IntAct" id="A6NCE7">
    <property type="interactions" value="15"/>
</dbReference>
<dbReference type="STRING" id="9606.ENSP00000450524"/>
<dbReference type="iPTMnet" id="A6NCE7"/>
<dbReference type="PhosphoSitePlus" id="A6NCE7"/>
<dbReference type="SwissPalm" id="A6NCE7"/>
<dbReference type="BioMuta" id="MAP1LC3B2"/>
<dbReference type="jPOST" id="A6NCE7"/>
<dbReference type="MassIVE" id="A6NCE7"/>
<dbReference type="PaxDb" id="9606-ENSP00000450524"/>
<dbReference type="PeptideAtlas" id="A6NCE7"/>
<dbReference type="ProteomicsDB" id="828"/>
<dbReference type="Pumba" id="A6NCE7"/>
<dbReference type="TopDownProteomics" id="A6NCE7"/>
<dbReference type="Antibodypedia" id="75194">
    <property type="antibodies" value="28 antibodies from 7 providers"/>
</dbReference>
<dbReference type="DNASU" id="643246"/>
<dbReference type="Ensembl" id="ENST00000556529.4">
    <property type="protein sequence ID" value="ENSP00000450524.1"/>
    <property type="gene ID" value="ENSG00000258102.5"/>
</dbReference>
<dbReference type="GeneID" id="643246"/>
<dbReference type="KEGG" id="hsa:643246"/>
<dbReference type="MANE-Select" id="ENST00000556529.4">
    <property type="protein sequence ID" value="ENSP00000450524.1"/>
    <property type="RefSeq nucleotide sequence ID" value="NM_001085481.3"/>
    <property type="RefSeq protein sequence ID" value="NP_001078950.1"/>
</dbReference>
<dbReference type="UCSC" id="uc009zwk.2">
    <property type="organism name" value="human"/>
</dbReference>
<dbReference type="AGR" id="HGNC:34390"/>
<dbReference type="CTD" id="643246"/>
<dbReference type="DisGeNET" id="643246"/>
<dbReference type="GeneCards" id="MAP1LC3B2"/>
<dbReference type="HGNC" id="HGNC:34390">
    <property type="gene designation" value="MAP1LC3B2"/>
</dbReference>
<dbReference type="HPA" id="ENSG00000258102">
    <property type="expression patterns" value="Tissue enhanced (brain)"/>
</dbReference>
<dbReference type="MIM" id="620673">
    <property type="type" value="gene"/>
</dbReference>
<dbReference type="neXtProt" id="NX_A6NCE7"/>
<dbReference type="OpenTargets" id="ENSG00000258102"/>
<dbReference type="PharmGKB" id="PA162394969"/>
<dbReference type="VEuPathDB" id="HostDB:ENSG00000258102"/>
<dbReference type="eggNOG" id="KOG1654">
    <property type="taxonomic scope" value="Eukaryota"/>
</dbReference>
<dbReference type="GeneTree" id="ENSGT00940000154158"/>
<dbReference type="HOGENOM" id="CLU_119276_1_0_1"/>
<dbReference type="InParanoid" id="A6NCE7"/>
<dbReference type="OMA" id="CARLCIF"/>
<dbReference type="OrthoDB" id="6738456at2759"/>
<dbReference type="PAN-GO" id="A6NCE7">
    <property type="GO annotations" value="10 GO annotations based on evolutionary models"/>
</dbReference>
<dbReference type="PhylomeDB" id="A6NCE7"/>
<dbReference type="TreeFam" id="TF312964"/>
<dbReference type="PathwayCommons" id="A6NCE7"/>
<dbReference type="SignaLink" id="A6NCE7"/>
<dbReference type="BioGRID-ORCS" id="643246">
    <property type="hits" value="11 hits in 730 CRISPR screens"/>
</dbReference>
<dbReference type="ChiTaRS" id="MAP1LC3B2">
    <property type="organism name" value="human"/>
</dbReference>
<dbReference type="GenomeRNAi" id="643246"/>
<dbReference type="Pharos" id="A6NCE7">
    <property type="development level" value="Tdark"/>
</dbReference>
<dbReference type="PRO" id="PR:A6NCE7"/>
<dbReference type="Proteomes" id="UP000005640">
    <property type="component" value="Chromosome 12"/>
</dbReference>
<dbReference type="RNAct" id="A6NCE7">
    <property type="molecule type" value="protein"/>
</dbReference>
<dbReference type="Bgee" id="ENSG00000258102">
    <property type="expression patterns" value="Expressed in cerebellar hemisphere and 97 other cell types or tissues"/>
</dbReference>
<dbReference type="GO" id="GO:0000421">
    <property type="term" value="C:autophagosome membrane"/>
    <property type="evidence" value="ECO:0000318"/>
    <property type="project" value="GO_Central"/>
</dbReference>
<dbReference type="GO" id="GO:0031410">
    <property type="term" value="C:cytoplasmic vesicle"/>
    <property type="evidence" value="ECO:0007669"/>
    <property type="project" value="UniProtKB-KW"/>
</dbReference>
<dbReference type="GO" id="GO:0012505">
    <property type="term" value="C:endomembrane system"/>
    <property type="evidence" value="ECO:0007669"/>
    <property type="project" value="UniProtKB-SubCell"/>
</dbReference>
<dbReference type="GO" id="GO:0005874">
    <property type="term" value="C:microtubule"/>
    <property type="evidence" value="ECO:0007669"/>
    <property type="project" value="UniProtKB-KW"/>
</dbReference>
<dbReference type="GO" id="GO:0008017">
    <property type="term" value="F:microtubule binding"/>
    <property type="evidence" value="ECO:0000318"/>
    <property type="project" value="GO_Central"/>
</dbReference>
<dbReference type="GO" id="GO:0008429">
    <property type="term" value="F:phosphatidylethanolamine binding"/>
    <property type="evidence" value="ECO:0000318"/>
    <property type="project" value="GO_Central"/>
</dbReference>
<dbReference type="GO" id="GO:0031625">
    <property type="term" value="F:ubiquitin protein ligase binding"/>
    <property type="evidence" value="ECO:0000318"/>
    <property type="project" value="GO_Central"/>
</dbReference>
<dbReference type="GO" id="GO:0000045">
    <property type="term" value="P:autophagosome assembly"/>
    <property type="evidence" value="ECO:0000318"/>
    <property type="project" value="GO_Central"/>
</dbReference>
<dbReference type="GO" id="GO:0097352">
    <property type="term" value="P:autophagosome maturation"/>
    <property type="evidence" value="ECO:0000318"/>
    <property type="project" value="GO_Central"/>
</dbReference>
<dbReference type="GO" id="GO:0006995">
    <property type="term" value="P:cellular response to nitrogen starvation"/>
    <property type="evidence" value="ECO:0000318"/>
    <property type="project" value="GO_Central"/>
</dbReference>
<dbReference type="GO" id="GO:0000423">
    <property type="term" value="P:mitophagy"/>
    <property type="evidence" value="ECO:0000318"/>
    <property type="project" value="GO_Central"/>
</dbReference>
<dbReference type="CDD" id="cd17235">
    <property type="entry name" value="Ubl_ATG8_MAP1LC3B"/>
    <property type="match status" value="1"/>
</dbReference>
<dbReference type="FunFam" id="3.10.20.90:FF:000059">
    <property type="entry name" value="Microtubule-associated proteins 1A/1B light chain 3B"/>
    <property type="match status" value="1"/>
</dbReference>
<dbReference type="Gene3D" id="3.10.20.90">
    <property type="entry name" value="Phosphatidylinositol 3-kinase Catalytic Subunit, Chain A, domain 1"/>
    <property type="match status" value="1"/>
</dbReference>
<dbReference type="InterPro" id="IPR004241">
    <property type="entry name" value="Atg8-like"/>
</dbReference>
<dbReference type="InterPro" id="IPR029071">
    <property type="entry name" value="Ubiquitin-like_domsf"/>
</dbReference>
<dbReference type="PANTHER" id="PTHR10969">
    <property type="entry name" value="MICROTUBULE-ASSOCIATED PROTEINS 1A/1B LIGHT CHAIN 3-RELATED"/>
    <property type="match status" value="1"/>
</dbReference>
<dbReference type="Pfam" id="PF02991">
    <property type="entry name" value="ATG8"/>
    <property type="match status" value="1"/>
</dbReference>
<dbReference type="SUPFAM" id="SSF54236">
    <property type="entry name" value="Ubiquitin-like"/>
    <property type="match status" value="1"/>
</dbReference>